<sequence length="929" mass="109782">MDHTGEQNIQSVKSYEFTPIGYIKEKQNNGASKRPNESPIKESMQDTFRNESPPRKVRRTSIDDAMNSRMFNDSMQFDDTLPELDVNLQSSKLTSINMNKKNLIKELKENSNASNPLKEQQEQLSKLTTENYNLKLKCNSLLKVLNNVTDQGELRKSLEFLDEIEEWKSKYSTANSEFNLLKIKYDDLVIKFRNLESKVDEQESEVEDHTRCIIERDNLQNKIDKLSEELGTLNDKLDTITKELIAKDELIASNEEDIKQLNSHIDTLKNTIRGLEETIIEKDDNLKKQKDEIKTLNNNLNDSDHLGSEFLLLQNKLKEKNSQISVLENNLIDSKNTATELKTRLENLQKEYDDKLREKINQIHKLDDNIKQLKSERDSKYVSLDTNDKVRKDFERMRENNANLDSKLSQISNENKLFRDKISKLSNQLDDTKRERDNQVELMKRRIDEIITNNNRENSIAADKSEEIREKQEAHINELQRKLNDTLKVQTLSISTVEDKFKAEILKTKKELEENAQKLQKSEELVKELKRQVIENTTNASERNSKRLETKDKEINLLKNDIIELKNKINSLEKDSKLEDNNLREYYTNKIRQIEEESLNEKVKLEREIFMLKSERDTLIESNKHDINFWKSKCNSLEKQNEALLSQENEGFSSVNLKLNQRLKELDELLNQNNTLKKDNMELTRKLSKSQILNEEYKVELRKAVADLDMATKEYQKSKDFTKIRGSDDSNFELDNMRKNLLIMKTKYNNIKKDYLTKLSELQEENLQLEKKLSMNQPTSRSSDNAAAVQQDRIDYYRLKYHNEVKSNNDLKVMNEYLNRVLMAGSQQIRLDLLKLKEEMNLNDYNYSNFPNRDYYNSRNPYESAYDFRFVNNSHNIFENRHRKKFKTIALLVKACVRMKNTAIKRRWDEQRINYLQRKIAVDDNRITW</sequence>
<organism>
    <name type="scientific">Vanderwaltozyma polyspora (strain ATCC 22028 / DSM 70294 / BCRC 21397 / CBS 2163 / NBRC 10782 / NRRL Y-8283 / UCD 57-17)</name>
    <name type="common">Kluyveromyces polysporus</name>
    <dbReference type="NCBI Taxonomy" id="436907"/>
    <lineage>
        <taxon>Eukaryota</taxon>
        <taxon>Fungi</taxon>
        <taxon>Dikarya</taxon>
        <taxon>Ascomycota</taxon>
        <taxon>Saccharomycotina</taxon>
        <taxon>Saccharomycetes</taxon>
        <taxon>Saccharomycetales</taxon>
        <taxon>Saccharomycetaceae</taxon>
        <taxon>Vanderwaltozyma</taxon>
    </lineage>
</organism>
<protein>
    <recommendedName>
        <fullName>Spindle pole body component 110</fullName>
    </recommendedName>
    <alternativeName>
        <fullName>Spindle pole body spacer protein SPC110</fullName>
    </alternativeName>
</protein>
<evidence type="ECO:0000250" key="1"/>
<evidence type="ECO:0000255" key="2"/>
<evidence type="ECO:0000256" key="3">
    <source>
        <dbReference type="SAM" id="MobiDB-lite"/>
    </source>
</evidence>
<evidence type="ECO:0000305" key="4"/>
<comment type="function">
    <text evidence="1">Component of the spindle pole body (SPB) required for the proper execution of spindle pole body (SPB) duplication. Potential role in cross-linking filaments or anchoring other molecules. It is essential for growth (By similarity).</text>
</comment>
<comment type="subunit">
    <text evidence="1">Homodimer.</text>
</comment>
<comment type="subcellular location">
    <subcellularLocation>
        <location evidence="1">Nucleus</location>
    </subcellularLocation>
    <subcellularLocation>
        <location evidence="1">Cytoplasm</location>
        <location evidence="1">Cytoskeleton</location>
        <location evidence="1">Microtubule organizing center</location>
        <location evidence="1">Spindle pole body</location>
    </subcellularLocation>
    <text evidence="1">Tightly associated with the nucleus. It is present in a granular pattern that excludes the nucleolus.</text>
</comment>
<comment type="similarity">
    <text evidence="4">Belongs to the SPC110 family.</text>
</comment>
<name>SP110_VANPO</name>
<reference key="1">
    <citation type="journal article" date="2007" name="Proc. Natl. Acad. Sci. U.S.A.">
        <title>Independent sorting-out of thousands of duplicated gene pairs in two yeast species descended from a whole-genome duplication.</title>
        <authorList>
            <person name="Scannell D.R."/>
            <person name="Frank A.C."/>
            <person name="Conant G.C."/>
            <person name="Byrne K.P."/>
            <person name="Woolfit M."/>
            <person name="Wolfe K.H."/>
        </authorList>
    </citation>
    <scope>NUCLEOTIDE SEQUENCE [LARGE SCALE GENOMIC DNA]</scope>
    <source>
        <strain>ATCC 22028 / DSM 70294 / BCRC 21397 / CBS 2163 / NBRC 10782 / NRRL Y-8283 / UCD 57-17</strain>
    </source>
</reference>
<dbReference type="EMBL" id="DS480393">
    <property type="protein sequence ID" value="EDO18111.1"/>
    <property type="molecule type" value="Genomic_DNA"/>
</dbReference>
<dbReference type="RefSeq" id="XP_001645969.1">
    <property type="nucleotide sequence ID" value="XM_001645919.1"/>
</dbReference>
<dbReference type="SMR" id="A7THU9"/>
<dbReference type="FunCoup" id="A7THU9">
    <property type="interactions" value="334"/>
</dbReference>
<dbReference type="GeneID" id="5546381"/>
<dbReference type="KEGG" id="vpo:Kpol_1031p15"/>
<dbReference type="eggNOG" id="ENOG502QUTQ">
    <property type="taxonomic scope" value="Eukaryota"/>
</dbReference>
<dbReference type="HOGENOM" id="CLU_329279_0_0_1"/>
<dbReference type="InParanoid" id="A7THU9"/>
<dbReference type="OMA" id="MENASNK"/>
<dbReference type="OrthoDB" id="10255522at2759"/>
<dbReference type="Proteomes" id="UP000000267">
    <property type="component" value="Unassembled WGS sequence"/>
</dbReference>
<dbReference type="GO" id="GO:0005737">
    <property type="term" value="C:cytoplasm"/>
    <property type="evidence" value="ECO:0007669"/>
    <property type="project" value="UniProtKB-KW"/>
</dbReference>
<dbReference type="GO" id="GO:0005634">
    <property type="term" value="C:nucleus"/>
    <property type="evidence" value="ECO:0007669"/>
    <property type="project" value="UniProtKB-SubCell"/>
</dbReference>
<dbReference type="GO" id="GO:0005816">
    <property type="term" value="C:spindle pole body"/>
    <property type="evidence" value="ECO:0007669"/>
    <property type="project" value="UniProtKB-SubCell"/>
</dbReference>
<dbReference type="Gene3D" id="1.10.287.1490">
    <property type="match status" value="1"/>
</dbReference>
<dbReference type="Gene3D" id="6.10.310.10">
    <property type="match status" value="1"/>
</dbReference>
<dbReference type="InterPro" id="IPR040593">
    <property type="entry name" value="Spc110_C"/>
</dbReference>
<dbReference type="Pfam" id="PF18520">
    <property type="entry name" value="Spc110_C"/>
    <property type="match status" value="1"/>
</dbReference>
<keyword id="KW-0175">Coiled coil</keyword>
<keyword id="KW-0963">Cytoplasm</keyword>
<keyword id="KW-0206">Cytoskeleton</keyword>
<keyword id="KW-0539">Nucleus</keyword>
<keyword id="KW-1185">Reference proteome</keyword>
<proteinExistence type="inferred from homology"/>
<gene>
    <name type="primary">SPC110</name>
    <name type="ORF">Kpol_1031p15</name>
</gene>
<feature type="chain" id="PRO_0000409202" description="Spindle pole body component 110">
    <location>
        <begin position="1"/>
        <end position="929"/>
    </location>
</feature>
<feature type="region of interest" description="Disordered" evidence="3">
    <location>
        <begin position="1"/>
        <end position="66"/>
    </location>
</feature>
<feature type="coiled-coil region" evidence="2">
    <location>
        <begin position="117"/>
        <end position="777"/>
    </location>
</feature>
<feature type="compositionally biased region" description="Polar residues" evidence="3">
    <location>
        <begin position="1"/>
        <end position="13"/>
    </location>
</feature>
<feature type="compositionally biased region" description="Basic and acidic residues" evidence="3">
    <location>
        <begin position="34"/>
        <end position="54"/>
    </location>
</feature>
<accession>A7THU9</accession>